<protein>
    <recommendedName>
        <fullName evidence="1">Shikimate dehydrogenase (NADP(+))</fullName>
        <shortName evidence="1">SDH</shortName>
        <ecNumber evidence="1">1.1.1.25</ecNumber>
    </recommendedName>
</protein>
<gene>
    <name evidence="1" type="primary">aroE</name>
    <name type="ordered locus">Maqu_0048</name>
</gene>
<dbReference type="EC" id="1.1.1.25" evidence="1"/>
<dbReference type="EMBL" id="CP000514">
    <property type="protein sequence ID" value="ABM17155.1"/>
    <property type="molecule type" value="Genomic_DNA"/>
</dbReference>
<dbReference type="RefSeq" id="WP_011783628.1">
    <property type="nucleotide sequence ID" value="NC_008740.1"/>
</dbReference>
<dbReference type="SMR" id="A1TWN6"/>
<dbReference type="STRING" id="351348.Maqu_0048"/>
<dbReference type="KEGG" id="maq:Maqu_0048"/>
<dbReference type="eggNOG" id="COG0169">
    <property type="taxonomic scope" value="Bacteria"/>
</dbReference>
<dbReference type="HOGENOM" id="CLU_044063_2_1_6"/>
<dbReference type="OrthoDB" id="9776868at2"/>
<dbReference type="UniPathway" id="UPA00053">
    <property type="reaction ID" value="UER00087"/>
</dbReference>
<dbReference type="Proteomes" id="UP000000998">
    <property type="component" value="Chromosome"/>
</dbReference>
<dbReference type="GO" id="GO:0005829">
    <property type="term" value="C:cytosol"/>
    <property type="evidence" value="ECO:0007669"/>
    <property type="project" value="TreeGrafter"/>
</dbReference>
<dbReference type="GO" id="GO:0050661">
    <property type="term" value="F:NADP binding"/>
    <property type="evidence" value="ECO:0007669"/>
    <property type="project" value="InterPro"/>
</dbReference>
<dbReference type="GO" id="GO:0004764">
    <property type="term" value="F:shikimate 3-dehydrogenase (NADP+) activity"/>
    <property type="evidence" value="ECO:0007669"/>
    <property type="project" value="UniProtKB-UniRule"/>
</dbReference>
<dbReference type="GO" id="GO:0008652">
    <property type="term" value="P:amino acid biosynthetic process"/>
    <property type="evidence" value="ECO:0007669"/>
    <property type="project" value="UniProtKB-KW"/>
</dbReference>
<dbReference type="GO" id="GO:0009073">
    <property type="term" value="P:aromatic amino acid family biosynthetic process"/>
    <property type="evidence" value="ECO:0007669"/>
    <property type="project" value="UniProtKB-KW"/>
</dbReference>
<dbReference type="GO" id="GO:0009423">
    <property type="term" value="P:chorismate biosynthetic process"/>
    <property type="evidence" value="ECO:0007669"/>
    <property type="project" value="UniProtKB-UniRule"/>
</dbReference>
<dbReference type="GO" id="GO:0019632">
    <property type="term" value="P:shikimate metabolic process"/>
    <property type="evidence" value="ECO:0007669"/>
    <property type="project" value="InterPro"/>
</dbReference>
<dbReference type="CDD" id="cd01065">
    <property type="entry name" value="NAD_bind_Shikimate_DH"/>
    <property type="match status" value="1"/>
</dbReference>
<dbReference type="FunFam" id="3.40.50.10860:FF:000006">
    <property type="entry name" value="Shikimate dehydrogenase (NADP(+))"/>
    <property type="match status" value="1"/>
</dbReference>
<dbReference type="FunFam" id="3.40.50.720:FF:000104">
    <property type="entry name" value="Shikimate dehydrogenase (NADP(+))"/>
    <property type="match status" value="1"/>
</dbReference>
<dbReference type="Gene3D" id="3.40.50.10860">
    <property type="entry name" value="Leucine Dehydrogenase, chain A, domain 1"/>
    <property type="match status" value="1"/>
</dbReference>
<dbReference type="Gene3D" id="3.40.50.720">
    <property type="entry name" value="NAD(P)-binding Rossmann-like Domain"/>
    <property type="match status" value="1"/>
</dbReference>
<dbReference type="HAMAP" id="MF_00222">
    <property type="entry name" value="Shikimate_DH_AroE"/>
    <property type="match status" value="1"/>
</dbReference>
<dbReference type="InterPro" id="IPR046346">
    <property type="entry name" value="Aminoacid_DH-like_N_sf"/>
</dbReference>
<dbReference type="InterPro" id="IPR036291">
    <property type="entry name" value="NAD(P)-bd_dom_sf"/>
</dbReference>
<dbReference type="InterPro" id="IPR041121">
    <property type="entry name" value="SDH_C"/>
</dbReference>
<dbReference type="InterPro" id="IPR011342">
    <property type="entry name" value="Shikimate_DH"/>
</dbReference>
<dbReference type="InterPro" id="IPR013708">
    <property type="entry name" value="Shikimate_DH-bd_N"/>
</dbReference>
<dbReference type="InterPro" id="IPR022893">
    <property type="entry name" value="Shikimate_DH_fam"/>
</dbReference>
<dbReference type="InterPro" id="IPR006151">
    <property type="entry name" value="Shikm_DH/Glu-tRNA_Rdtase"/>
</dbReference>
<dbReference type="NCBIfam" id="TIGR00507">
    <property type="entry name" value="aroE"/>
    <property type="match status" value="1"/>
</dbReference>
<dbReference type="NCBIfam" id="NF001310">
    <property type="entry name" value="PRK00258.1-2"/>
    <property type="match status" value="1"/>
</dbReference>
<dbReference type="PANTHER" id="PTHR21089:SF1">
    <property type="entry name" value="BIFUNCTIONAL 3-DEHYDROQUINATE DEHYDRATASE_SHIKIMATE DEHYDROGENASE, CHLOROPLASTIC"/>
    <property type="match status" value="1"/>
</dbReference>
<dbReference type="PANTHER" id="PTHR21089">
    <property type="entry name" value="SHIKIMATE DEHYDROGENASE"/>
    <property type="match status" value="1"/>
</dbReference>
<dbReference type="Pfam" id="PF18317">
    <property type="entry name" value="SDH_C"/>
    <property type="match status" value="1"/>
</dbReference>
<dbReference type="Pfam" id="PF01488">
    <property type="entry name" value="Shikimate_DH"/>
    <property type="match status" value="1"/>
</dbReference>
<dbReference type="Pfam" id="PF08501">
    <property type="entry name" value="Shikimate_dh_N"/>
    <property type="match status" value="1"/>
</dbReference>
<dbReference type="SUPFAM" id="SSF53223">
    <property type="entry name" value="Aminoacid dehydrogenase-like, N-terminal domain"/>
    <property type="match status" value="1"/>
</dbReference>
<dbReference type="SUPFAM" id="SSF51735">
    <property type="entry name" value="NAD(P)-binding Rossmann-fold domains"/>
    <property type="match status" value="1"/>
</dbReference>
<organism>
    <name type="scientific">Marinobacter nauticus (strain ATCC 700491 / DSM 11845 / VT8)</name>
    <name type="common">Marinobacter aquaeolei</name>
    <dbReference type="NCBI Taxonomy" id="351348"/>
    <lineage>
        <taxon>Bacteria</taxon>
        <taxon>Pseudomonadati</taxon>
        <taxon>Pseudomonadota</taxon>
        <taxon>Gammaproteobacteria</taxon>
        <taxon>Pseudomonadales</taxon>
        <taxon>Marinobacteraceae</taxon>
        <taxon>Marinobacter</taxon>
    </lineage>
</organism>
<proteinExistence type="inferred from homology"/>
<evidence type="ECO:0000255" key="1">
    <source>
        <dbReference type="HAMAP-Rule" id="MF_00222"/>
    </source>
</evidence>
<name>AROE_MARN8</name>
<sequence length="275" mass="29658">MTNDLYAVVGNPISHSKSPRIHSLFAQQTGEAVEYTAIQAPLEDFAGTVHHFFDHGGKGLNITVPFKEQAWTLAEHRTHRAELAGAANTLYLDQEDQLVADNTDGVGIVRDLRDNHGVPLKGARVLVLGAGGAVRGVLGPLLDEQPASVVVANRTVARAEALARLFGREHSGIELSACGFEQVEGPFDLVINGTSASLKGDLPAITADVIRADTVVYDMMYSLQTTTFNQWALDHGAVRVFDGLGMLVEQAAEAFFVWRGVRPETSAVTEELRTD</sequence>
<feature type="chain" id="PRO_1000021297" description="Shikimate dehydrogenase (NADP(+))">
    <location>
        <begin position="1"/>
        <end position="275"/>
    </location>
</feature>
<feature type="active site" description="Proton acceptor" evidence="1">
    <location>
        <position position="67"/>
    </location>
</feature>
<feature type="binding site" evidence="1">
    <location>
        <begin position="16"/>
        <end position="18"/>
    </location>
    <ligand>
        <name>shikimate</name>
        <dbReference type="ChEBI" id="CHEBI:36208"/>
    </ligand>
</feature>
<feature type="binding site" evidence="1">
    <location>
        <position position="63"/>
    </location>
    <ligand>
        <name>shikimate</name>
        <dbReference type="ChEBI" id="CHEBI:36208"/>
    </ligand>
</feature>
<feature type="binding site" evidence="1">
    <location>
        <position position="88"/>
    </location>
    <ligand>
        <name>shikimate</name>
        <dbReference type="ChEBI" id="CHEBI:36208"/>
    </ligand>
</feature>
<feature type="binding site" evidence="1">
    <location>
        <position position="104"/>
    </location>
    <ligand>
        <name>shikimate</name>
        <dbReference type="ChEBI" id="CHEBI:36208"/>
    </ligand>
</feature>
<feature type="binding site" evidence="1">
    <location>
        <begin position="129"/>
        <end position="133"/>
    </location>
    <ligand>
        <name>NADP(+)</name>
        <dbReference type="ChEBI" id="CHEBI:58349"/>
    </ligand>
</feature>
<feature type="binding site" evidence="1">
    <location>
        <begin position="153"/>
        <end position="158"/>
    </location>
    <ligand>
        <name>NADP(+)</name>
        <dbReference type="ChEBI" id="CHEBI:58349"/>
    </ligand>
</feature>
<feature type="binding site" evidence="1">
    <location>
        <position position="219"/>
    </location>
    <ligand>
        <name>NADP(+)</name>
        <dbReference type="ChEBI" id="CHEBI:58349"/>
    </ligand>
</feature>
<feature type="binding site" evidence="1">
    <location>
        <position position="221"/>
    </location>
    <ligand>
        <name>shikimate</name>
        <dbReference type="ChEBI" id="CHEBI:36208"/>
    </ligand>
</feature>
<feature type="binding site" evidence="1">
    <location>
        <position position="243"/>
    </location>
    <ligand>
        <name>NADP(+)</name>
        <dbReference type="ChEBI" id="CHEBI:58349"/>
    </ligand>
</feature>
<reference key="1">
    <citation type="journal article" date="2011" name="Appl. Environ. Microbiol.">
        <title>Genomic potential of Marinobacter aquaeolei, a biogeochemical 'opportunitroph'.</title>
        <authorList>
            <person name="Singer E."/>
            <person name="Webb E.A."/>
            <person name="Nelson W.C."/>
            <person name="Heidelberg J.F."/>
            <person name="Ivanova N."/>
            <person name="Pati A."/>
            <person name="Edwards K.J."/>
        </authorList>
    </citation>
    <scope>NUCLEOTIDE SEQUENCE [LARGE SCALE GENOMIC DNA]</scope>
    <source>
        <strain>ATCC 700491 / DSM 11845 / VT8</strain>
    </source>
</reference>
<accession>A1TWN6</accession>
<comment type="function">
    <text evidence="1">Involved in the biosynthesis of the chorismate, which leads to the biosynthesis of aromatic amino acids. Catalyzes the reversible NADPH linked reduction of 3-dehydroshikimate (DHSA) to yield shikimate (SA).</text>
</comment>
<comment type="catalytic activity">
    <reaction evidence="1">
        <text>shikimate + NADP(+) = 3-dehydroshikimate + NADPH + H(+)</text>
        <dbReference type="Rhea" id="RHEA:17737"/>
        <dbReference type="ChEBI" id="CHEBI:15378"/>
        <dbReference type="ChEBI" id="CHEBI:16630"/>
        <dbReference type="ChEBI" id="CHEBI:36208"/>
        <dbReference type="ChEBI" id="CHEBI:57783"/>
        <dbReference type="ChEBI" id="CHEBI:58349"/>
        <dbReference type="EC" id="1.1.1.25"/>
    </reaction>
</comment>
<comment type="pathway">
    <text evidence="1">Metabolic intermediate biosynthesis; chorismate biosynthesis; chorismate from D-erythrose 4-phosphate and phosphoenolpyruvate: step 4/7.</text>
</comment>
<comment type="subunit">
    <text evidence="1">Homodimer.</text>
</comment>
<comment type="similarity">
    <text evidence="1">Belongs to the shikimate dehydrogenase family.</text>
</comment>
<keyword id="KW-0028">Amino-acid biosynthesis</keyword>
<keyword id="KW-0057">Aromatic amino acid biosynthesis</keyword>
<keyword id="KW-0521">NADP</keyword>
<keyword id="KW-0560">Oxidoreductase</keyword>